<keyword id="KW-1015">Disulfide bond</keyword>
<keyword id="KW-0372">Hormone</keyword>
<keyword id="KW-0479">Metal-binding</keyword>
<keyword id="KW-0964">Secreted</keyword>
<keyword id="KW-0732">Signal</keyword>
<keyword id="KW-0862">Zinc</keyword>
<organism>
    <name type="scientific">Hypophthalmichthys nobilis</name>
    <name type="common">Bighead carp</name>
    <name type="synonym">Aristichthys nobilis</name>
    <dbReference type="NCBI Taxonomy" id="7965"/>
    <lineage>
        <taxon>Eukaryota</taxon>
        <taxon>Metazoa</taxon>
        <taxon>Chordata</taxon>
        <taxon>Craniata</taxon>
        <taxon>Vertebrata</taxon>
        <taxon>Euteleostomi</taxon>
        <taxon>Actinopterygii</taxon>
        <taxon>Neopterygii</taxon>
        <taxon>Teleostei</taxon>
        <taxon>Ostariophysi</taxon>
        <taxon>Cypriniformes</taxon>
        <taxon>Xenocyprididae</taxon>
        <taxon>Xenocypridinae</taxon>
        <taxon>Hypophthalmichthys</taxon>
    </lineage>
</organism>
<dbReference type="EMBL" id="X60473">
    <property type="protein sequence ID" value="CAA43006.1"/>
    <property type="molecule type" value="mRNA"/>
</dbReference>
<dbReference type="PIR" id="I50763">
    <property type="entry name" value="I50763"/>
</dbReference>
<dbReference type="SMR" id="P69160"/>
<dbReference type="GO" id="GO:0005615">
    <property type="term" value="C:extracellular space"/>
    <property type="evidence" value="ECO:0007669"/>
    <property type="project" value="InterPro"/>
</dbReference>
<dbReference type="GO" id="GO:0070186">
    <property type="term" value="F:growth hormone activity"/>
    <property type="evidence" value="ECO:0007669"/>
    <property type="project" value="TreeGrafter"/>
</dbReference>
<dbReference type="GO" id="GO:0005131">
    <property type="term" value="F:growth hormone receptor binding"/>
    <property type="evidence" value="ECO:0007669"/>
    <property type="project" value="InterPro"/>
</dbReference>
<dbReference type="GO" id="GO:0046872">
    <property type="term" value="F:metal ion binding"/>
    <property type="evidence" value="ECO:0007669"/>
    <property type="project" value="UniProtKB-KW"/>
</dbReference>
<dbReference type="GO" id="GO:0048513">
    <property type="term" value="P:animal organ development"/>
    <property type="evidence" value="ECO:0007669"/>
    <property type="project" value="TreeGrafter"/>
</dbReference>
<dbReference type="GO" id="GO:0060396">
    <property type="term" value="P:growth hormone receptor signaling pathway"/>
    <property type="evidence" value="ECO:0007669"/>
    <property type="project" value="TreeGrafter"/>
</dbReference>
<dbReference type="GO" id="GO:0045927">
    <property type="term" value="P:positive regulation of growth"/>
    <property type="evidence" value="ECO:0007669"/>
    <property type="project" value="TreeGrafter"/>
</dbReference>
<dbReference type="GO" id="GO:0046427">
    <property type="term" value="P:positive regulation of receptor signaling pathway via JAK-STAT"/>
    <property type="evidence" value="ECO:0007669"/>
    <property type="project" value="TreeGrafter"/>
</dbReference>
<dbReference type="GO" id="GO:0031667">
    <property type="term" value="P:response to nutrient levels"/>
    <property type="evidence" value="ECO:0007669"/>
    <property type="project" value="TreeGrafter"/>
</dbReference>
<dbReference type="CDD" id="cd10285">
    <property type="entry name" value="somatotropin_like"/>
    <property type="match status" value="1"/>
</dbReference>
<dbReference type="FunFam" id="1.20.1250.10:FF:000009">
    <property type="entry name" value="Growth hormone"/>
    <property type="match status" value="1"/>
</dbReference>
<dbReference type="Gene3D" id="1.20.1250.10">
    <property type="match status" value="1"/>
</dbReference>
<dbReference type="InterPro" id="IPR009079">
    <property type="entry name" value="4_helix_cytokine-like_core"/>
</dbReference>
<dbReference type="InterPro" id="IPR034975">
    <property type="entry name" value="Somatotropin"/>
</dbReference>
<dbReference type="InterPro" id="IPR001400">
    <property type="entry name" value="Somatotropin/Prolactin"/>
</dbReference>
<dbReference type="InterPro" id="IPR018116">
    <property type="entry name" value="Somatotropin_CS"/>
</dbReference>
<dbReference type="PANTHER" id="PTHR11417:SF2">
    <property type="entry name" value="SOMATOTROPIN"/>
    <property type="match status" value="1"/>
</dbReference>
<dbReference type="PANTHER" id="PTHR11417">
    <property type="entry name" value="SOMATOTROPIN,PROLACTIN"/>
    <property type="match status" value="1"/>
</dbReference>
<dbReference type="Pfam" id="PF00103">
    <property type="entry name" value="Hormone_1"/>
    <property type="match status" value="1"/>
</dbReference>
<dbReference type="PRINTS" id="PR00836">
    <property type="entry name" value="SOMATOTROPIN"/>
</dbReference>
<dbReference type="SUPFAM" id="SSF47266">
    <property type="entry name" value="4-helical cytokines"/>
    <property type="match status" value="1"/>
</dbReference>
<dbReference type="PROSITE" id="PS00266">
    <property type="entry name" value="SOMATOTROPIN_1"/>
    <property type="match status" value="1"/>
</dbReference>
<dbReference type="PROSITE" id="PS00338">
    <property type="entry name" value="SOMATOTROPIN_2"/>
    <property type="match status" value="1"/>
</dbReference>
<comment type="function">
    <text>Growth hormone plays an important role in growth control.</text>
</comment>
<comment type="subcellular location">
    <subcellularLocation>
        <location>Secreted</location>
    </subcellularLocation>
</comment>
<comment type="similarity">
    <text evidence="2">Belongs to the somatotropin/prolactin family.</text>
</comment>
<protein>
    <recommendedName>
        <fullName>Somatotropin</fullName>
    </recommendedName>
    <alternativeName>
        <fullName>Growth hormone</fullName>
    </alternativeName>
</protein>
<name>SOMA_HYPNO</name>
<sequence length="210" mass="23580">MARALVLLSVVLVSLLVNQGTASENQRLFNNAVIRVQHLHQLAAKMINDFEDNLLPEERRQLSKIFPLSFCNSDSIEAPTGKDETQKSSMLKLLRISFRLIESWEFPSQTLSGAVSNSLTVGNPNQITEKLADLKVGISVLIKGCLDGQPNMDDNDSLPLPFEDFYLTMGESSLRESFRLLACFKKDMHKVETYLRVANCRRSLDSNCTL</sequence>
<gene>
    <name type="primary">gh</name>
</gene>
<feature type="signal peptide" evidence="1">
    <location>
        <begin position="1"/>
        <end position="23"/>
    </location>
</feature>
<feature type="chain" id="PRO_0000033026" description="Somatotropin">
    <location>
        <begin position="24"/>
        <end position="210"/>
    </location>
</feature>
<feature type="binding site" evidence="1">
    <location>
        <position position="38"/>
    </location>
    <ligand>
        <name>Zn(2+)</name>
        <dbReference type="ChEBI" id="CHEBI:29105"/>
    </ligand>
</feature>
<feature type="binding site" evidence="1">
    <location>
        <position position="192"/>
    </location>
    <ligand>
        <name>Zn(2+)</name>
        <dbReference type="ChEBI" id="CHEBI:29105"/>
    </ligand>
</feature>
<feature type="disulfide bond" evidence="1">
    <location>
        <begin position="71"/>
        <end position="183"/>
    </location>
</feature>
<feature type="disulfide bond" evidence="1">
    <location>
        <begin position="200"/>
        <end position="208"/>
    </location>
</feature>
<evidence type="ECO:0000250" key="1"/>
<evidence type="ECO:0000305" key="2"/>
<accession>P69160</accession>
<accession>P20390</accession>
<accession>Q00220</accession>
<accession>Q00221</accession>
<proteinExistence type="evidence at transcript level"/>
<reference key="1">
    <citation type="journal article" date="1992" name="Gen. Comp. Endocrinol.">
        <title>The primary structures of growth hormones of three cyprinid species: bighead carp, silver carp, and grass carp.</title>
        <authorList>
            <person name="Chang Y.S."/>
            <person name="Liu C.S."/>
            <person name="Huang F.-L."/>
            <person name="Lo T.B."/>
        </authorList>
    </citation>
    <scope>NUCLEOTIDE SEQUENCE [MRNA]</scope>
    <source>
        <tissue>Pituitary</tissue>
    </source>
</reference>